<protein>
    <recommendedName>
        <fullName evidence="1">Protein SlyX homolog</fullName>
    </recommendedName>
</protein>
<gene>
    <name evidence="1" type="primary">slyX</name>
    <name type="ordered locus">XOO4796</name>
</gene>
<organism>
    <name type="scientific">Xanthomonas oryzae pv. oryzae (strain KACC10331 / KXO85)</name>
    <dbReference type="NCBI Taxonomy" id="291331"/>
    <lineage>
        <taxon>Bacteria</taxon>
        <taxon>Pseudomonadati</taxon>
        <taxon>Pseudomonadota</taxon>
        <taxon>Gammaproteobacteria</taxon>
        <taxon>Lysobacterales</taxon>
        <taxon>Lysobacteraceae</taxon>
        <taxon>Xanthomonas</taxon>
    </lineage>
</organism>
<evidence type="ECO:0000255" key="1">
    <source>
        <dbReference type="HAMAP-Rule" id="MF_00715"/>
    </source>
</evidence>
<keyword id="KW-1185">Reference proteome</keyword>
<accession>Q05HZ7</accession>
<sequence length="78" mass="8762">MHEQLSPRDQALEARLVELETRLSFQEQALNELSEALADARLTGARNAELIRHLLDDLGKVRSTLFADAADEPPPPHY</sequence>
<proteinExistence type="inferred from homology"/>
<feature type="chain" id="PRO_1000045746" description="Protein SlyX homolog">
    <location>
        <begin position="1"/>
        <end position="78"/>
    </location>
</feature>
<comment type="similarity">
    <text evidence="1">Belongs to the SlyX family.</text>
</comment>
<dbReference type="EMBL" id="AE013598">
    <property type="protein sequence ID" value="ABJ89936.1"/>
    <property type="molecule type" value="Genomic_DNA"/>
</dbReference>
<dbReference type="SMR" id="Q05HZ7"/>
<dbReference type="STRING" id="291331.XOO4796"/>
<dbReference type="KEGG" id="xoo:XOO4796"/>
<dbReference type="HOGENOM" id="CLU_180796_4_2_6"/>
<dbReference type="Proteomes" id="UP000006735">
    <property type="component" value="Chromosome"/>
</dbReference>
<dbReference type="Gene3D" id="1.20.5.300">
    <property type="match status" value="1"/>
</dbReference>
<dbReference type="HAMAP" id="MF_00715">
    <property type="entry name" value="SlyX"/>
    <property type="match status" value="1"/>
</dbReference>
<dbReference type="InterPro" id="IPR007236">
    <property type="entry name" value="SlyX"/>
</dbReference>
<dbReference type="NCBIfam" id="NF002024">
    <property type="entry name" value="PRK00846.1"/>
    <property type="match status" value="1"/>
</dbReference>
<dbReference type="PANTHER" id="PTHR36508">
    <property type="entry name" value="PROTEIN SLYX"/>
    <property type="match status" value="1"/>
</dbReference>
<dbReference type="PANTHER" id="PTHR36508:SF1">
    <property type="entry name" value="PROTEIN SLYX"/>
    <property type="match status" value="1"/>
</dbReference>
<dbReference type="Pfam" id="PF04102">
    <property type="entry name" value="SlyX"/>
    <property type="match status" value="1"/>
</dbReference>
<name>SLYX_XANOR</name>
<reference key="1">
    <citation type="journal article" date="2005" name="Nucleic Acids Res.">
        <title>The genome sequence of Xanthomonas oryzae pathovar oryzae KACC10331, the bacterial blight pathogen of rice.</title>
        <authorList>
            <person name="Lee B.-M."/>
            <person name="Park Y.-J."/>
            <person name="Park D.-S."/>
            <person name="Kang H.-W."/>
            <person name="Kim J.-G."/>
            <person name="Song E.-S."/>
            <person name="Park I.-C."/>
            <person name="Yoon U.-H."/>
            <person name="Hahn J.-H."/>
            <person name="Koo B.-S."/>
            <person name="Lee G.-B."/>
            <person name="Kim H."/>
            <person name="Park H.-S."/>
            <person name="Yoon K.-O."/>
            <person name="Kim J.-H."/>
            <person name="Jung C.-H."/>
            <person name="Koh N.-H."/>
            <person name="Seo J.-S."/>
            <person name="Go S.-J."/>
        </authorList>
    </citation>
    <scope>NUCLEOTIDE SEQUENCE [LARGE SCALE GENOMIC DNA]</scope>
    <source>
        <strain>KACC10331 / KXO85</strain>
    </source>
</reference>